<sequence length="75" mass="8809">MEEVPFENAMQRLEEIVDLMNQPTTSLDASLALYEEADALMRICESRIRQVEQRVRELAEKRHESSLFEEQAVVR</sequence>
<reference key="1">
    <citation type="journal article" date="1999" name="Nat. Genet.">
        <title>Comparative genomes of Chlamydia pneumoniae and C. trachomatis.</title>
        <authorList>
            <person name="Kalman S."/>
            <person name="Mitchell W.P."/>
            <person name="Marathe R."/>
            <person name="Lammel C.J."/>
            <person name="Fan J."/>
            <person name="Hyman R.W."/>
            <person name="Olinger L."/>
            <person name="Grimwood J."/>
            <person name="Davis R.W."/>
            <person name="Stephens R.S."/>
        </authorList>
    </citation>
    <scope>NUCLEOTIDE SEQUENCE [LARGE SCALE GENOMIC DNA]</scope>
    <source>
        <strain>CWL029</strain>
    </source>
</reference>
<reference key="2">
    <citation type="journal article" date="2000" name="Nucleic Acids Res.">
        <title>Genome sequences of Chlamydia trachomatis MoPn and Chlamydia pneumoniae AR39.</title>
        <authorList>
            <person name="Read T.D."/>
            <person name="Brunham R.C."/>
            <person name="Shen C."/>
            <person name="Gill S.R."/>
            <person name="Heidelberg J.F."/>
            <person name="White O."/>
            <person name="Hickey E.K."/>
            <person name="Peterson J.D."/>
            <person name="Utterback T.R."/>
            <person name="Berry K.J."/>
            <person name="Bass S."/>
            <person name="Linher K.D."/>
            <person name="Weidman J.F."/>
            <person name="Khouri H.M."/>
            <person name="Craven B."/>
            <person name="Bowman C."/>
            <person name="Dodson R.J."/>
            <person name="Gwinn M.L."/>
            <person name="Nelson W.C."/>
            <person name="DeBoy R.T."/>
            <person name="Kolonay J.F."/>
            <person name="McClarty G."/>
            <person name="Salzberg S.L."/>
            <person name="Eisen J.A."/>
            <person name="Fraser C.M."/>
        </authorList>
    </citation>
    <scope>NUCLEOTIDE SEQUENCE [LARGE SCALE GENOMIC DNA]</scope>
    <source>
        <strain>AR39</strain>
    </source>
</reference>
<reference key="3">
    <citation type="journal article" date="2000" name="Nucleic Acids Res.">
        <title>Comparison of whole genome sequences of Chlamydia pneumoniae J138 from Japan and CWL029 from USA.</title>
        <authorList>
            <person name="Shirai M."/>
            <person name="Hirakawa H."/>
            <person name="Kimoto M."/>
            <person name="Tabuchi M."/>
            <person name="Kishi F."/>
            <person name="Ouchi K."/>
            <person name="Shiba T."/>
            <person name="Ishii K."/>
            <person name="Hattori M."/>
            <person name="Kuhara S."/>
            <person name="Nakazawa T."/>
        </authorList>
    </citation>
    <scope>NUCLEOTIDE SEQUENCE [LARGE SCALE GENOMIC DNA]</scope>
    <source>
        <strain>J138</strain>
    </source>
</reference>
<reference key="4">
    <citation type="submission" date="2002-05" db="EMBL/GenBank/DDBJ databases">
        <title>The genome sequence of Chlamydia pneumoniae TW183 and comparison with other Chlamydia strains based on whole genome sequence analysis.</title>
        <authorList>
            <person name="Geng M.M."/>
            <person name="Schuhmacher A."/>
            <person name="Muehldorfer I."/>
            <person name="Bensch K.W."/>
            <person name="Schaefer K.P."/>
            <person name="Schneider S."/>
            <person name="Pohl T."/>
            <person name="Essig A."/>
            <person name="Marre R."/>
            <person name="Melchers K."/>
        </authorList>
    </citation>
    <scope>NUCLEOTIDE SEQUENCE [LARGE SCALE GENOMIC DNA]</scope>
    <source>
        <strain>TW-183</strain>
    </source>
</reference>
<protein>
    <recommendedName>
        <fullName evidence="1">Exodeoxyribonuclease 7 small subunit</fullName>
        <ecNumber evidence="1">3.1.11.6</ecNumber>
    </recommendedName>
    <alternativeName>
        <fullName evidence="1">Exodeoxyribonuclease VII small subunit</fullName>
        <shortName evidence="1">Exonuclease VII small subunit</shortName>
    </alternativeName>
</protein>
<accession>Q9K1Y4</accession>
<name>EX7S_CHLPN</name>
<feature type="chain" id="PRO_0000206935" description="Exodeoxyribonuclease 7 small subunit">
    <location>
        <begin position="1"/>
        <end position="75"/>
    </location>
</feature>
<organism>
    <name type="scientific">Chlamydia pneumoniae</name>
    <name type="common">Chlamydophila pneumoniae</name>
    <dbReference type="NCBI Taxonomy" id="83558"/>
    <lineage>
        <taxon>Bacteria</taxon>
        <taxon>Pseudomonadati</taxon>
        <taxon>Chlamydiota</taxon>
        <taxon>Chlamydiia</taxon>
        <taxon>Chlamydiales</taxon>
        <taxon>Chlamydiaceae</taxon>
        <taxon>Chlamydia/Chlamydophila group</taxon>
        <taxon>Chlamydia</taxon>
    </lineage>
</organism>
<proteinExistence type="inferred from homology"/>
<dbReference type="EC" id="3.1.11.6" evidence="1"/>
<dbReference type="EMBL" id="AE001363">
    <property type="status" value="NOT_ANNOTATED_CDS"/>
    <property type="molecule type" value="Genomic_DNA"/>
</dbReference>
<dbReference type="EMBL" id="AE002161">
    <property type="protein sequence ID" value="AAF38587.1"/>
    <property type="molecule type" value="Genomic_DNA"/>
</dbReference>
<dbReference type="EMBL" id="BA000008">
    <property type="status" value="NOT_ANNOTATED_CDS"/>
    <property type="molecule type" value="Genomic_DNA"/>
</dbReference>
<dbReference type="EMBL" id="AE009440">
    <property type="protein sequence ID" value="AAP99032.1"/>
    <property type="molecule type" value="Genomic_DNA"/>
</dbReference>
<dbReference type="PIR" id="A81539">
    <property type="entry name" value="A81539"/>
</dbReference>
<dbReference type="RefSeq" id="WP_010892181.1">
    <property type="nucleotide sequence ID" value="NZ_LN847257.1"/>
</dbReference>
<dbReference type="SMR" id="Q9K1Y4"/>
<dbReference type="STRING" id="406984.CPK_ORF00486"/>
<dbReference type="GeneID" id="45051120"/>
<dbReference type="KEGG" id="cpa:CP_0788"/>
<dbReference type="KEGG" id="cpt:CpB1104"/>
<dbReference type="eggNOG" id="COG1722">
    <property type="taxonomic scope" value="Bacteria"/>
</dbReference>
<dbReference type="HOGENOM" id="CLU_145918_3_4_0"/>
<dbReference type="OMA" id="RICESHI"/>
<dbReference type="OrthoDB" id="21553at2"/>
<dbReference type="Proteomes" id="UP000000583">
    <property type="component" value="Chromosome"/>
</dbReference>
<dbReference type="Proteomes" id="UP000000801">
    <property type="component" value="Chromosome"/>
</dbReference>
<dbReference type="GO" id="GO:0005829">
    <property type="term" value="C:cytosol"/>
    <property type="evidence" value="ECO:0007669"/>
    <property type="project" value="TreeGrafter"/>
</dbReference>
<dbReference type="GO" id="GO:0009318">
    <property type="term" value="C:exodeoxyribonuclease VII complex"/>
    <property type="evidence" value="ECO:0007669"/>
    <property type="project" value="InterPro"/>
</dbReference>
<dbReference type="GO" id="GO:0008855">
    <property type="term" value="F:exodeoxyribonuclease VII activity"/>
    <property type="evidence" value="ECO:0007669"/>
    <property type="project" value="UniProtKB-UniRule"/>
</dbReference>
<dbReference type="GO" id="GO:0006308">
    <property type="term" value="P:DNA catabolic process"/>
    <property type="evidence" value="ECO:0007669"/>
    <property type="project" value="UniProtKB-UniRule"/>
</dbReference>
<dbReference type="Gene3D" id="1.10.287.1040">
    <property type="entry name" value="Exonuclease VII, small subunit"/>
    <property type="match status" value="1"/>
</dbReference>
<dbReference type="HAMAP" id="MF_00337">
    <property type="entry name" value="Exonuc_7_S"/>
    <property type="match status" value="1"/>
</dbReference>
<dbReference type="InterPro" id="IPR003761">
    <property type="entry name" value="Exonuc_VII_S"/>
</dbReference>
<dbReference type="InterPro" id="IPR037004">
    <property type="entry name" value="Exonuc_VII_ssu_sf"/>
</dbReference>
<dbReference type="NCBIfam" id="NF002140">
    <property type="entry name" value="PRK00977.1-4"/>
    <property type="match status" value="1"/>
</dbReference>
<dbReference type="NCBIfam" id="TIGR01280">
    <property type="entry name" value="xseB"/>
    <property type="match status" value="1"/>
</dbReference>
<dbReference type="PANTHER" id="PTHR34137">
    <property type="entry name" value="EXODEOXYRIBONUCLEASE 7 SMALL SUBUNIT"/>
    <property type="match status" value="1"/>
</dbReference>
<dbReference type="PANTHER" id="PTHR34137:SF1">
    <property type="entry name" value="EXODEOXYRIBONUCLEASE 7 SMALL SUBUNIT"/>
    <property type="match status" value="1"/>
</dbReference>
<dbReference type="Pfam" id="PF02609">
    <property type="entry name" value="Exonuc_VII_S"/>
    <property type="match status" value="1"/>
</dbReference>
<dbReference type="PIRSF" id="PIRSF006488">
    <property type="entry name" value="Exonuc_VII_S"/>
    <property type="match status" value="1"/>
</dbReference>
<dbReference type="SUPFAM" id="SSF116842">
    <property type="entry name" value="XseB-like"/>
    <property type="match status" value="1"/>
</dbReference>
<comment type="function">
    <text evidence="1">Bidirectionally degrades single-stranded DNA into large acid-insoluble oligonucleotides, which are then degraded further into small acid-soluble oligonucleotides.</text>
</comment>
<comment type="catalytic activity">
    <reaction evidence="1">
        <text>Exonucleolytic cleavage in either 5'- to 3'- or 3'- to 5'-direction to yield nucleoside 5'-phosphates.</text>
        <dbReference type="EC" id="3.1.11.6"/>
    </reaction>
</comment>
<comment type="subunit">
    <text evidence="1">Heterooligomer composed of large and small subunits.</text>
</comment>
<comment type="subcellular location">
    <subcellularLocation>
        <location evidence="1">Cytoplasm</location>
    </subcellularLocation>
</comment>
<comment type="similarity">
    <text evidence="1 2">Belongs to the XseB family.</text>
</comment>
<keyword id="KW-0963">Cytoplasm</keyword>
<keyword id="KW-0269">Exonuclease</keyword>
<keyword id="KW-0378">Hydrolase</keyword>
<keyword id="KW-0540">Nuclease</keyword>
<evidence type="ECO:0000255" key="1">
    <source>
        <dbReference type="HAMAP-Rule" id="MF_00337"/>
    </source>
</evidence>
<evidence type="ECO:0000305" key="2"/>
<gene>
    <name evidence="1" type="primary">xseB</name>
    <name type="ordered locus">CPn_1061.1</name>
    <name type="ordered locus">CP_0788</name>
    <name type="ordered locus">CpB1104</name>
</gene>